<evidence type="ECO:0000255" key="1">
    <source>
        <dbReference type="HAMAP-Rule" id="MF_00599"/>
    </source>
</evidence>
<accession>B1XCS4</accession>
<protein>
    <recommendedName>
        <fullName evidence="1">Cell division protein FtsB</fullName>
    </recommendedName>
</protein>
<feature type="chain" id="PRO_1000129926" description="Cell division protein FtsB">
    <location>
        <begin position="1"/>
        <end position="103"/>
    </location>
</feature>
<feature type="topological domain" description="Cytoplasmic" evidence="1">
    <location>
        <begin position="1"/>
        <end position="3"/>
    </location>
</feature>
<feature type="transmembrane region" description="Helical" evidence="1">
    <location>
        <begin position="4"/>
        <end position="21"/>
    </location>
</feature>
<feature type="topological domain" description="Periplasmic" evidence="1">
    <location>
        <begin position="22"/>
        <end position="103"/>
    </location>
</feature>
<feature type="coiled-coil region" evidence="1">
    <location>
        <begin position="31"/>
        <end position="71"/>
    </location>
</feature>
<comment type="function">
    <text evidence="1">Essential cell division protein. May link together the upstream cell division proteins, which are predominantly cytoplasmic, with the downstream cell division proteins, which are predominantly periplasmic.</text>
</comment>
<comment type="subunit">
    <text evidence="1">Part of a complex composed of FtsB, FtsL and FtsQ.</text>
</comment>
<comment type="subcellular location">
    <subcellularLocation>
        <location evidence="1">Cell inner membrane</location>
        <topology evidence="1">Single-pass type II membrane protein</topology>
    </subcellularLocation>
    <text evidence="1">Localizes to the division septum.</text>
</comment>
<comment type="similarity">
    <text evidence="1">Belongs to the FtsB family.</text>
</comment>
<gene>
    <name evidence="1" type="primary">ftsB</name>
    <name type="ordered locus">ECDH10B_2916</name>
</gene>
<sequence>MGKLTLLLLAILVWLQYSLWFGKNGIHDYTRVNDDVAAQQATNAKLKARNDQLFAEIDDLNGGQEALEERARNELSMTRPGETFYRLVPDASKRAQSAGQNNR</sequence>
<name>FTSB_ECODH</name>
<dbReference type="EMBL" id="CP000948">
    <property type="protein sequence ID" value="ACB03865.1"/>
    <property type="molecule type" value="Genomic_DNA"/>
</dbReference>
<dbReference type="RefSeq" id="WP_000517476.1">
    <property type="nucleotide sequence ID" value="NC_010473.1"/>
</dbReference>
<dbReference type="SMR" id="B1XCS4"/>
<dbReference type="GeneID" id="93779258"/>
<dbReference type="KEGG" id="ecd:ECDH10B_2916"/>
<dbReference type="HOGENOM" id="CLU_134863_5_2_6"/>
<dbReference type="GO" id="GO:0032153">
    <property type="term" value="C:cell division site"/>
    <property type="evidence" value="ECO:0007669"/>
    <property type="project" value="UniProtKB-UniRule"/>
</dbReference>
<dbReference type="GO" id="GO:0030428">
    <property type="term" value="C:cell septum"/>
    <property type="evidence" value="ECO:0007669"/>
    <property type="project" value="TreeGrafter"/>
</dbReference>
<dbReference type="GO" id="GO:0005886">
    <property type="term" value="C:plasma membrane"/>
    <property type="evidence" value="ECO:0007669"/>
    <property type="project" value="UniProtKB-SubCell"/>
</dbReference>
<dbReference type="GO" id="GO:0043093">
    <property type="term" value="P:FtsZ-dependent cytokinesis"/>
    <property type="evidence" value="ECO:0007669"/>
    <property type="project" value="UniProtKB-UniRule"/>
</dbReference>
<dbReference type="FunFam" id="1.20.5.400:FF:000001">
    <property type="entry name" value="Cell division protein FtsB"/>
    <property type="match status" value="1"/>
</dbReference>
<dbReference type="Gene3D" id="1.20.5.400">
    <property type="match status" value="1"/>
</dbReference>
<dbReference type="HAMAP" id="MF_00599">
    <property type="entry name" value="FtsB"/>
    <property type="match status" value="1"/>
</dbReference>
<dbReference type="InterPro" id="IPR023081">
    <property type="entry name" value="Cell_div_FtsB"/>
</dbReference>
<dbReference type="InterPro" id="IPR007060">
    <property type="entry name" value="FtsL/DivIC"/>
</dbReference>
<dbReference type="NCBIfam" id="NF002058">
    <property type="entry name" value="PRK00888.1"/>
    <property type="match status" value="1"/>
</dbReference>
<dbReference type="PANTHER" id="PTHR37485">
    <property type="entry name" value="CELL DIVISION PROTEIN FTSB"/>
    <property type="match status" value="1"/>
</dbReference>
<dbReference type="PANTHER" id="PTHR37485:SF1">
    <property type="entry name" value="CELL DIVISION PROTEIN FTSB"/>
    <property type="match status" value="1"/>
</dbReference>
<dbReference type="Pfam" id="PF04977">
    <property type="entry name" value="DivIC"/>
    <property type="match status" value="1"/>
</dbReference>
<proteinExistence type="inferred from homology"/>
<organism>
    <name type="scientific">Escherichia coli (strain K12 / DH10B)</name>
    <dbReference type="NCBI Taxonomy" id="316385"/>
    <lineage>
        <taxon>Bacteria</taxon>
        <taxon>Pseudomonadati</taxon>
        <taxon>Pseudomonadota</taxon>
        <taxon>Gammaproteobacteria</taxon>
        <taxon>Enterobacterales</taxon>
        <taxon>Enterobacteriaceae</taxon>
        <taxon>Escherichia</taxon>
    </lineage>
</organism>
<reference key="1">
    <citation type="journal article" date="2008" name="J. Bacteriol.">
        <title>The complete genome sequence of Escherichia coli DH10B: insights into the biology of a laboratory workhorse.</title>
        <authorList>
            <person name="Durfee T."/>
            <person name="Nelson R."/>
            <person name="Baldwin S."/>
            <person name="Plunkett G. III"/>
            <person name="Burland V."/>
            <person name="Mau B."/>
            <person name="Petrosino J.F."/>
            <person name="Qin X."/>
            <person name="Muzny D.M."/>
            <person name="Ayele M."/>
            <person name="Gibbs R.A."/>
            <person name="Csorgo B."/>
            <person name="Posfai G."/>
            <person name="Weinstock G.M."/>
            <person name="Blattner F.R."/>
        </authorList>
    </citation>
    <scope>NUCLEOTIDE SEQUENCE [LARGE SCALE GENOMIC DNA]</scope>
    <source>
        <strain>K12 / DH10B</strain>
    </source>
</reference>
<keyword id="KW-0131">Cell cycle</keyword>
<keyword id="KW-0132">Cell division</keyword>
<keyword id="KW-0997">Cell inner membrane</keyword>
<keyword id="KW-1003">Cell membrane</keyword>
<keyword id="KW-0175">Coiled coil</keyword>
<keyword id="KW-0472">Membrane</keyword>
<keyword id="KW-0812">Transmembrane</keyword>
<keyword id="KW-1133">Transmembrane helix</keyword>